<reference key="1">
    <citation type="journal article" date="2004" name="Nat. Biotechnol.">
        <title>The genome sequence of the anaerobic, sulfate-reducing bacterium Desulfovibrio vulgaris Hildenborough.</title>
        <authorList>
            <person name="Heidelberg J.F."/>
            <person name="Seshadri R."/>
            <person name="Haveman S.A."/>
            <person name="Hemme C.L."/>
            <person name="Paulsen I.T."/>
            <person name="Kolonay J.F."/>
            <person name="Eisen J.A."/>
            <person name="Ward N.L."/>
            <person name="Methe B.A."/>
            <person name="Brinkac L.M."/>
            <person name="Daugherty S.C."/>
            <person name="DeBoy R.T."/>
            <person name="Dodson R.J."/>
            <person name="Durkin A.S."/>
            <person name="Madupu R."/>
            <person name="Nelson W.C."/>
            <person name="Sullivan S.A."/>
            <person name="Fouts D.E."/>
            <person name="Haft D.H."/>
            <person name="Selengut J."/>
            <person name="Peterson J.D."/>
            <person name="Davidsen T.M."/>
            <person name="Zafar N."/>
            <person name="Zhou L."/>
            <person name="Radune D."/>
            <person name="Dimitrov G."/>
            <person name="Hance M."/>
            <person name="Tran K."/>
            <person name="Khouri H.M."/>
            <person name="Gill J."/>
            <person name="Utterback T.R."/>
            <person name="Feldblyum T.V."/>
            <person name="Wall J.D."/>
            <person name="Voordouw G."/>
            <person name="Fraser C.M."/>
        </authorList>
    </citation>
    <scope>NUCLEOTIDE SEQUENCE [LARGE SCALE GENOMIC DNA]</scope>
    <source>
        <strain>ATCC 29579 / DSM 644 / CCUG 34227 / NCIMB 8303 / VKM B-1760 / Hildenborough</strain>
    </source>
</reference>
<keyword id="KW-0547">Nucleotide-binding</keyword>
<keyword id="KW-1185">Reference proteome</keyword>
<sequence length="163" mass="18614">MPSFDVVNKIELQELDNAVNNVKKEIETRYDFRNTTTEIDLHKGDLRITVVAADEMKMRALEEMLHAHCVRRKIDPRCLEFKEIEATSRGAVKREVQVKEGIAKDVAQKIVKAIKDSKLKVQGAIQDQQVRVTGKKIDDLQDVIALLREGDFGIPLQFVNMKN</sequence>
<name>Y1981_NITV2</name>
<feature type="chain" id="PRO_0000261933" description="Nucleotide-binding protein DVU_1981">
    <location>
        <begin position="1"/>
        <end position="163"/>
    </location>
</feature>
<evidence type="ECO:0000255" key="1">
    <source>
        <dbReference type="HAMAP-Rule" id="MF_00632"/>
    </source>
</evidence>
<accession>Q72AL1</accession>
<comment type="function">
    <text evidence="1">Nucleotide-binding protein.</text>
</comment>
<comment type="similarity">
    <text evidence="1">Belongs to the YajQ family.</text>
</comment>
<protein>
    <recommendedName>
        <fullName evidence="1">Nucleotide-binding protein DVU_1981</fullName>
    </recommendedName>
</protein>
<dbReference type="EMBL" id="AE017285">
    <property type="protein sequence ID" value="AAS96457.1"/>
    <property type="molecule type" value="Genomic_DNA"/>
</dbReference>
<dbReference type="RefSeq" id="WP_010939267.1">
    <property type="nucleotide sequence ID" value="NC_002937.3"/>
</dbReference>
<dbReference type="RefSeq" id="YP_011198.1">
    <property type="nucleotide sequence ID" value="NC_002937.3"/>
</dbReference>
<dbReference type="SMR" id="Q72AL1"/>
<dbReference type="STRING" id="882.DVU_1981"/>
<dbReference type="PaxDb" id="882-DVU_1981"/>
<dbReference type="EnsemblBacteria" id="AAS96457">
    <property type="protein sequence ID" value="AAS96457"/>
    <property type="gene ID" value="DVU_1981"/>
</dbReference>
<dbReference type="KEGG" id="dvu:DVU_1981"/>
<dbReference type="PATRIC" id="fig|882.5.peg.1822"/>
<dbReference type="eggNOG" id="COG1666">
    <property type="taxonomic scope" value="Bacteria"/>
</dbReference>
<dbReference type="HOGENOM" id="CLU_099839_1_0_7"/>
<dbReference type="OrthoDB" id="9801447at2"/>
<dbReference type="PhylomeDB" id="Q72AL1"/>
<dbReference type="Proteomes" id="UP000002194">
    <property type="component" value="Chromosome"/>
</dbReference>
<dbReference type="GO" id="GO:0005829">
    <property type="term" value="C:cytosol"/>
    <property type="evidence" value="ECO:0007669"/>
    <property type="project" value="TreeGrafter"/>
</dbReference>
<dbReference type="GO" id="GO:0000166">
    <property type="term" value="F:nucleotide binding"/>
    <property type="evidence" value="ECO:0007669"/>
    <property type="project" value="TreeGrafter"/>
</dbReference>
<dbReference type="CDD" id="cd11740">
    <property type="entry name" value="YajQ_like"/>
    <property type="match status" value="1"/>
</dbReference>
<dbReference type="Gene3D" id="3.30.70.860">
    <property type="match status" value="1"/>
</dbReference>
<dbReference type="Gene3D" id="3.30.70.990">
    <property type="entry name" value="YajQ-like, domain 2"/>
    <property type="match status" value="1"/>
</dbReference>
<dbReference type="HAMAP" id="MF_00632">
    <property type="entry name" value="YajQ"/>
    <property type="match status" value="1"/>
</dbReference>
<dbReference type="InterPro" id="IPR007551">
    <property type="entry name" value="DUF520"/>
</dbReference>
<dbReference type="InterPro" id="IPR035571">
    <property type="entry name" value="UPF0234-like_C"/>
</dbReference>
<dbReference type="InterPro" id="IPR035570">
    <property type="entry name" value="UPF0234_N"/>
</dbReference>
<dbReference type="InterPro" id="IPR036183">
    <property type="entry name" value="YajQ-like_sf"/>
</dbReference>
<dbReference type="NCBIfam" id="NF003819">
    <property type="entry name" value="PRK05412.1"/>
    <property type="match status" value="1"/>
</dbReference>
<dbReference type="PANTHER" id="PTHR30476">
    <property type="entry name" value="UPF0234 PROTEIN YAJQ"/>
    <property type="match status" value="1"/>
</dbReference>
<dbReference type="PANTHER" id="PTHR30476:SF0">
    <property type="entry name" value="UPF0234 PROTEIN YAJQ"/>
    <property type="match status" value="1"/>
</dbReference>
<dbReference type="Pfam" id="PF04461">
    <property type="entry name" value="DUF520"/>
    <property type="match status" value="1"/>
</dbReference>
<dbReference type="SUPFAM" id="SSF89963">
    <property type="entry name" value="YajQ-like"/>
    <property type="match status" value="2"/>
</dbReference>
<gene>
    <name type="ordered locus">DVU_1981</name>
</gene>
<proteinExistence type="inferred from homology"/>
<organism>
    <name type="scientific">Nitratidesulfovibrio vulgaris (strain ATCC 29579 / DSM 644 / CCUG 34227 / NCIMB 8303 / VKM B-1760 / Hildenborough)</name>
    <name type="common">Desulfovibrio vulgaris</name>
    <dbReference type="NCBI Taxonomy" id="882"/>
    <lineage>
        <taxon>Bacteria</taxon>
        <taxon>Pseudomonadati</taxon>
        <taxon>Thermodesulfobacteriota</taxon>
        <taxon>Desulfovibrionia</taxon>
        <taxon>Desulfovibrionales</taxon>
        <taxon>Desulfovibrionaceae</taxon>
        <taxon>Nitratidesulfovibrio</taxon>
    </lineage>
</organism>